<protein>
    <recommendedName>
        <fullName evidence="1">Asparagine--tRNA ligase</fullName>
        <ecNumber evidence="1">6.1.1.22</ecNumber>
    </recommendedName>
    <alternativeName>
        <fullName evidence="1">Asparaginyl-tRNA synthetase</fullName>
        <shortName evidence="1">AsnRS</shortName>
    </alternativeName>
</protein>
<evidence type="ECO:0000255" key="1">
    <source>
        <dbReference type="HAMAP-Rule" id="MF_00534"/>
    </source>
</evidence>
<comment type="catalytic activity">
    <reaction evidence="1">
        <text>tRNA(Asn) + L-asparagine + ATP = L-asparaginyl-tRNA(Asn) + AMP + diphosphate + H(+)</text>
        <dbReference type="Rhea" id="RHEA:11180"/>
        <dbReference type="Rhea" id="RHEA-COMP:9659"/>
        <dbReference type="Rhea" id="RHEA-COMP:9674"/>
        <dbReference type="ChEBI" id="CHEBI:15378"/>
        <dbReference type="ChEBI" id="CHEBI:30616"/>
        <dbReference type="ChEBI" id="CHEBI:33019"/>
        <dbReference type="ChEBI" id="CHEBI:58048"/>
        <dbReference type="ChEBI" id="CHEBI:78442"/>
        <dbReference type="ChEBI" id="CHEBI:78515"/>
        <dbReference type="ChEBI" id="CHEBI:456215"/>
        <dbReference type="EC" id="6.1.1.22"/>
    </reaction>
</comment>
<comment type="subunit">
    <text evidence="1">Homodimer.</text>
</comment>
<comment type="subcellular location">
    <subcellularLocation>
        <location evidence="1">Cytoplasm</location>
    </subcellularLocation>
</comment>
<comment type="similarity">
    <text evidence="1">Belongs to the class-II aminoacyl-tRNA synthetase family.</text>
</comment>
<name>SYN_CLOBB</name>
<dbReference type="EC" id="6.1.1.22" evidence="1"/>
<dbReference type="EMBL" id="CP001056">
    <property type="protein sequence ID" value="ACD23255.1"/>
    <property type="molecule type" value="Genomic_DNA"/>
</dbReference>
<dbReference type="SMR" id="B2TI01"/>
<dbReference type="KEGG" id="cbk:CLL_A0142"/>
<dbReference type="PATRIC" id="fig|935198.13.peg.132"/>
<dbReference type="HOGENOM" id="CLU_004553_2_0_9"/>
<dbReference type="Proteomes" id="UP000001195">
    <property type="component" value="Chromosome"/>
</dbReference>
<dbReference type="GO" id="GO:0005737">
    <property type="term" value="C:cytoplasm"/>
    <property type="evidence" value="ECO:0007669"/>
    <property type="project" value="UniProtKB-SubCell"/>
</dbReference>
<dbReference type="GO" id="GO:0004816">
    <property type="term" value="F:asparagine-tRNA ligase activity"/>
    <property type="evidence" value="ECO:0007669"/>
    <property type="project" value="UniProtKB-UniRule"/>
</dbReference>
<dbReference type="GO" id="GO:0005524">
    <property type="term" value="F:ATP binding"/>
    <property type="evidence" value="ECO:0007669"/>
    <property type="project" value="UniProtKB-UniRule"/>
</dbReference>
<dbReference type="GO" id="GO:0140096">
    <property type="term" value="F:catalytic activity, acting on a protein"/>
    <property type="evidence" value="ECO:0007669"/>
    <property type="project" value="UniProtKB-ARBA"/>
</dbReference>
<dbReference type="GO" id="GO:0003676">
    <property type="term" value="F:nucleic acid binding"/>
    <property type="evidence" value="ECO:0007669"/>
    <property type="project" value="InterPro"/>
</dbReference>
<dbReference type="GO" id="GO:0016740">
    <property type="term" value="F:transferase activity"/>
    <property type="evidence" value="ECO:0007669"/>
    <property type="project" value="UniProtKB-ARBA"/>
</dbReference>
<dbReference type="GO" id="GO:0006421">
    <property type="term" value="P:asparaginyl-tRNA aminoacylation"/>
    <property type="evidence" value="ECO:0007669"/>
    <property type="project" value="UniProtKB-UniRule"/>
</dbReference>
<dbReference type="CDD" id="cd00776">
    <property type="entry name" value="AsxRS_core"/>
    <property type="match status" value="1"/>
</dbReference>
<dbReference type="CDD" id="cd04318">
    <property type="entry name" value="EcAsnRS_like_N"/>
    <property type="match status" value="1"/>
</dbReference>
<dbReference type="FunFam" id="3.30.930.10:FF:000016">
    <property type="entry name" value="Asparagine--tRNA ligase"/>
    <property type="match status" value="1"/>
</dbReference>
<dbReference type="Gene3D" id="3.30.930.10">
    <property type="entry name" value="Bira Bifunctional Protein, Domain 2"/>
    <property type="match status" value="1"/>
</dbReference>
<dbReference type="Gene3D" id="2.40.50.140">
    <property type="entry name" value="Nucleic acid-binding proteins"/>
    <property type="match status" value="1"/>
</dbReference>
<dbReference type="HAMAP" id="MF_00534">
    <property type="entry name" value="Asn_tRNA_synth"/>
    <property type="match status" value="1"/>
</dbReference>
<dbReference type="InterPro" id="IPR004364">
    <property type="entry name" value="Aa-tRNA-synt_II"/>
</dbReference>
<dbReference type="InterPro" id="IPR006195">
    <property type="entry name" value="aa-tRNA-synth_II"/>
</dbReference>
<dbReference type="InterPro" id="IPR045864">
    <property type="entry name" value="aa-tRNA-synth_II/BPL/LPL"/>
</dbReference>
<dbReference type="InterPro" id="IPR004522">
    <property type="entry name" value="Asn-tRNA-ligase"/>
</dbReference>
<dbReference type="InterPro" id="IPR002312">
    <property type="entry name" value="Asp/Asn-tRNA-synth_IIb"/>
</dbReference>
<dbReference type="InterPro" id="IPR012340">
    <property type="entry name" value="NA-bd_OB-fold"/>
</dbReference>
<dbReference type="InterPro" id="IPR004365">
    <property type="entry name" value="NA-bd_OB_tRNA"/>
</dbReference>
<dbReference type="NCBIfam" id="TIGR00457">
    <property type="entry name" value="asnS"/>
    <property type="match status" value="1"/>
</dbReference>
<dbReference type="NCBIfam" id="NF003037">
    <property type="entry name" value="PRK03932.1"/>
    <property type="match status" value="1"/>
</dbReference>
<dbReference type="PANTHER" id="PTHR22594:SF34">
    <property type="entry name" value="ASPARAGINE--TRNA LIGASE, MITOCHONDRIAL-RELATED"/>
    <property type="match status" value="1"/>
</dbReference>
<dbReference type="PANTHER" id="PTHR22594">
    <property type="entry name" value="ASPARTYL/LYSYL-TRNA SYNTHETASE"/>
    <property type="match status" value="1"/>
</dbReference>
<dbReference type="Pfam" id="PF00152">
    <property type="entry name" value="tRNA-synt_2"/>
    <property type="match status" value="1"/>
</dbReference>
<dbReference type="Pfam" id="PF01336">
    <property type="entry name" value="tRNA_anti-codon"/>
    <property type="match status" value="1"/>
</dbReference>
<dbReference type="PRINTS" id="PR01042">
    <property type="entry name" value="TRNASYNTHASP"/>
</dbReference>
<dbReference type="SUPFAM" id="SSF55681">
    <property type="entry name" value="Class II aaRS and biotin synthetases"/>
    <property type="match status" value="1"/>
</dbReference>
<dbReference type="SUPFAM" id="SSF50249">
    <property type="entry name" value="Nucleic acid-binding proteins"/>
    <property type="match status" value="1"/>
</dbReference>
<dbReference type="PROSITE" id="PS50862">
    <property type="entry name" value="AA_TRNA_LIGASE_II"/>
    <property type="match status" value="1"/>
</dbReference>
<reference key="1">
    <citation type="submission" date="2008-04" db="EMBL/GenBank/DDBJ databases">
        <title>Complete sequence of Clostridium botulinum strain Eklund.</title>
        <authorList>
            <person name="Brinkac L.M."/>
            <person name="Brown J.L."/>
            <person name="Bruce D."/>
            <person name="Detter C."/>
            <person name="Munk C."/>
            <person name="Smith L.A."/>
            <person name="Smith T.J."/>
            <person name="Sutton G."/>
            <person name="Brettin T.S."/>
        </authorList>
    </citation>
    <scope>NUCLEOTIDE SEQUENCE [LARGE SCALE GENOMIC DNA]</scope>
    <source>
        <strain>Eklund 17B / Type B</strain>
    </source>
</reference>
<sequence>MKNTVLIKKIYRETDQFLSKEVMISGWIRTLRASNAFGFIEINDGSFFKNIQVVFDDKLGNFKEISKLPISSSISVVGTLVATPDAKQPFEIQAKEIVIEGMSNSDYPLQKKRHTFEYLRSIAHLRPRSNAFSATFRVRSVAAFAIHKFFQEQGFVYTHTPIITGSDCEGAGEMFRVTTLDPKAPELTKEGDIDYTKDFFGKETNLTVSGQLNAECFALAFRNIYTFGPTFRAENSNTTRHAAEFWMIEPEIAFADLQDDMELAEAMLKYVIKYVMDECPEELQFFNSFVDKGLLERLNHVVSSDFAKVTYTEAVEILEKCDKEFDYDVSWGIDLQTEHERYLTEEHFKKPLFVTDYPKEIKAFYMRMNEDNKTVAATDLLVPGIGEIIGGSQREERLDVLEARMAELGLKKEDYWWYLELRKYGETKHAGFGLGFERLIMYITGMTNIRDVIPFPRTPGTSEF</sequence>
<accession>B2TI01</accession>
<keyword id="KW-0030">Aminoacyl-tRNA synthetase</keyword>
<keyword id="KW-0067">ATP-binding</keyword>
<keyword id="KW-0963">Cytoplasm</keyword>
<keyword id="KW-0436">Ligase</keyword>
<keyword id="KW-0547">Nucleotide-binding</keyword>
<keyword id="KW-0648">Protein biosynthesis</keyword>
<feature type="chain" id="PRO_1000128205" description="Asparagine--tRNA ligase">
    <location>
        <begin position="1"/>
        <end position="464"/>
    </location>
</feature>
<gene>
    <name evidence="1" type="primary">asnS</name>
    <name type="ordered locus">CLL_A0142</name>
</gene>
<proteinExistence type="inferred from homology"/>
<organism>
    <name type="scientific">Clostridium botulinum (strain Eklund 17B / Type B)</name>
    <dbReference type="NCBI Taxonomy" id="935198"/>
    <lineage>
        <taxon>Bacteria</taxon>
        <taxon>Bacillati</taxon>
        <taxon>Bacillota</taxon>
        <taxon>Clostridia</taxon>
        <taxon>Eubacteriales</taxon>
        <taxon>Clostridiaceae</taxon>
        <taxon>Clostridium</taxon>
    </lineage>
</organism>